<comment type="function">
    <text evidence="1">One of the primary rRNA binding proteins, it binds specifically to the 5'-end of 16S ribosomal RNA.</text>
</comment>
<comment type="subunit">
    <text evidence="1">Part of the 30S ribosomal subunit.</text>
</comment>
<comment type="similarity">
    <text evidence="1">Belongs to the universal ribosomal protein uS17 family.</text>
</comment>
<sequence>MTDKIRTLQGRVVSDKMEKSIVVAIERFVKHPIYGKFIKRTTKMHVHDENNECGIGDVVEIRECRPLSKTKSWTLVRVVEKAVL</sequence>
<name>RS17_SALA4</name>
<gene>
    <name evidence="1" type="primary">rpsQ</name>
    <name type="ordered locus">SeAg_B3627</name>
</gene>
<organism>
    <name type="scientific">Salmonella agona (strain SL483)</name>
    <dbReference type="NCBI Taxonomy" id="454166"/>
    <lineage>
        <taxon>Bacteria</taxon>
        <taxon>Pseudomonadati</taxon>
        <taxon>Pseudomonadota</taxon>
        <taxon>Gammaproteobacteria</taxon>
        <taxon>Enterobacterales</taxon>
        <taxon>Enterobacteriaceae</taxon>
        <taxon>Salmonella</taxon>
    </lineage>
</organism>
<evidence type="ECO:0000255" key="1">
    <source>
        <dbReference type="HAMAP-Rule" id="MF_01345"/>
    </source>
</evidence>
<evidence type="ECO:0000305" key="2"/>
<accession>B5F7T6</accession>
<reference key="1">
    <citation type="journal article" date="2011" name="J. Bacteriol.">
        <title>Comparative genomics of 28 Salmonella enterica isolates: evidence for CRISPR-mediated adaptive sublineage evolution.</title>
        <authorList>
            <person name="Fricke W.F."/>
            <person name="Mammel M.K."/>
            <person name="McDermott P.F."/>
            <person name="Tartera C."/>
            <person name="White D.G."/>
            <person name="Leclerc J.E."/>
            <person name="Ravel J."/>
            <person name="Cebula T.A."/>
        </authorList>
    </citation>
    <scope>NUCLEOTIDE SEQUENCE [LARGE SCALE GENOMIC DNA]</scope>
    <source>
        <strain>SL483</strain>
    </source>
</reference>
<proteinExistence type="inferred from homology"/>
<feature type="chain" id="PRO_1000143294" description="Small ribosomal subunit protein uS17">
    <location>
        <begin position="1"/>
        <end position="84"/>
    </location>
</feature>
<keyword id="KW-0687">Ribonucleoprotein</keyword>
<keyword id="KW-0689">Ribosomal protein</keyword>
<keyword id="KW-0694">RNA-binding</keyword>
<keyword id="KW-0699">rRNA-binding</keyword>
<protein>
    <recommendedName>
        <fullName evidence="1">Small ribosomal subunit protein uS17</fullName>
    </recommendedName>
    <alternativeName>
        <fullName evidence="2">30S ribosomal protein S17</fullName>
    </alternativeName>
</protein>
<dbReference type="EMBL" id="CP001138">
    <property type="protein sequence ID" value="ACH49983.1"/>
    <property type="molecule type" value="Genomic_DNA"/>
</dbReference>
<dbReference type="RefSeq" id="WP_000130101.1">
    <property type="nucleotide sequence ID" value="NC_011149.1"/>
</dbReference>
<dbReference type="SMR" id="B5F7T6"/>
<dbReference type="GeneID" id="66757766"/>
<dbReference type="KEGG" id="sea:SeAg_B3627"/>
<dbReference type="HOGENOM" id="CLU_073626_1_1_6"/>
<dbReference type="Proteomes" id="UP000008819">
    <property type="component" value="Chromosome"/>
</dbReference>
<dbReference type="GO" id="GO:0022627">
    <property type="term" value="C:cytosolic small ribosomal subunit"/>
    <property type="evidence" value="ECO:0007669"/>
    <property type="project" value="TreeGrafter"/>
</dbReference>
<dbReference type="GO" id="GO:0019843">
    <property type="term" value="F:rRNA binding"/>
    <property type="evidence" value="ECO:0007669"/>
    <property type="project" value="UniProtKB-UniRule"/>
</dbReference>
<dbReference type="GO" id="GO:0003735">
    <property type="term" value="F:structural constituent of ribosome"/>
    <property type="evidence" value="ECO:0007669"/>
    <property type="project" value="InterPro"/>
</dbReference>
<dbReference type="GO" id="GO:0006412">
    <property type="term" value="P:translation"/>
    <property type="evidence" value="ECO:0007669"/>
    <property type="project" value="UniProtKB-UniRule"/>
</dbReference>
<dbReference type="CDD" id="cd00364">
    <property type="entry name" value="Ribosomal_uS17"/>
    <property type="match status" value="1"/>
</dbReference>
<dbReference type="FunFam" id="2.40.50.140:FF:000014">
    <property type="entry name" value="30S ribosomal protein S17"/>
    <property type="match status" value="1"/>
</dbReference>
<dbReference type="Gene3D" id="2.40.50.140">
    <property type="entry name" value="Nucleic acid-binding proteins"/>
    <property type="match status" value="1"/>
</dbReference>
<dbReference type="HAMAP" id="MF_01345_B">
    <property type="entry name" value="Ribosomal_uS17_B"/>
    <property type="match status" value="1"/>
</dbReference>
<dbReference type="InterPro" id="IPR012340">
    <property type="entry name" value="NA-bd_OB-fold"/>
</dbReference>
<dbReference type="InterPro" id="IPR000266">
    <property type="entry name" value="Ribosomal_uS17"/>
</dbReference>
<dbReference type="InterPro" id="IPR019984">
    <property type="entry name" value="Ribosomal_uS17_bact/chlr"/>
</dbReference>
<dbReference type="InterPro" id="IPR019979">
    <property type="entry name" value="Ribosomal_uS17_CS"/>
</dbReference>
<dbReference type="NCBIfam" id="NF004123">
    <property type="entry name" value="PRK05610.1"/>
    <property type="match status" value="1"/>
</dbReference>
<dbReference type="NCBIfam" id="TIGR03635">
    <property type="entry name" value="uS17_bact"/>
    <property type="match status" value="1"/>
</dbReference>
<dbReference type="PANTHER" id="PTHR10744">
    <property type="entry name" value="40S RIBOSOMAL PROTEIN S11 FAMILY MEMBER"/>
    <property type="match status" value="1"/>
</dbReference>
<dbReference type="PANTHER" id="PTHR10744:SF1">
    <property type="entry name" value="SMALL RIBOSOMAL SUBUNIT PROTEIN US17M"/>
    <property type="match status" value="1"/>
</dbReference>
<dbReference type="Pfam" id="PF00366">
    <property type="entry name" value="Ribosomal_S17"/>
    <property type="match status" value="1"/>
</dbReference>
<dbReference type="PRINTS" id="PR00973">
    <property type="entry name" value="RIBOSOMALS17"/>
</dbReference>
<dbReference type="SUPFAM" id="SSF50249">
    <property type="entry name" value="Nucleic acid-binding proteins"/>
    <property type="match status" value="1"/>
</dbReference>
<dbReference type="PROSITE" id="PS00056">
    <property type="entry name" value="RIBOSOMAL_S17"/>
    <property type="match status" value="1"/>
</dbReference>